<sequence length="120" mass="13767">MFLLYEYDIFWAFLIISSAIPILAFLISGVLAPINKGPEKLSSYESGIEPMGDAWLQFRIRYYMFALVFVVFDVETVFLYPWAMSFDVLGVSVFIEALIFVLILIVGSVYAWRKGALEWS</sequence>
<reference key="1">
    <citation type="journal article" date="2008" name="Nature">
        <title>The draft genome of the transgenic tropical fruit tree papaya (Carica papaya Linnaeus).</title>
        <authorList>
            <person name="Ming R."/>
            <person name="Hou S."/>
            <person name="Feng Y."/>
            <person name="Yu Q."/>
            <person name="Dionne-Laporte A."/>
            <person name="Saw J.H."/>
            <person name="Senin P."/>
            <person name="Wang W."/>
            <person name="Ly B.V."/>
            <person name="Lewis K.L."/>
            <person name="Salzberg S.L."/>
            <person name="Feng L."/>
            <person name="Jones M.R."/>
            <person name="Skelton R.L."/>
            <person name="Murray J.E."/>
            <person name="Chen C."/>
            <person name="Qian W."/>
            <person name="Shen J."/>
            <person name="Du P."/>
            <person name="Eustice M."/>
            <person name="Tong E."/>
            <person name="Tang H."/>
            <person name="Lyons E."/>
            <person name="Paull R.E."/>
            <person name="Michael T.P."/>
            <person name="Wall K."/>
            <person name="Rice D.W."/>
            <person name="Albert H."/>
            <person name="Wang M.L."/>
            <person name="Zhu Y.J."/>
            <person name="Schatz M."/>
            <person name="Nagarajan N."/>
            <person name="Acob R.A."/>
            <person name="Guan P."/>
            <person name="Blas A."/>
            <person name="Wai C.M."/>
            <person name="Ackerman C.M."/>
            <person name="Ren Y."/>
            <person name="Liu C."/>
            <person name="Wang J."/>
            <person name="Wang J."/>
            <person name="Na J.K."/>
            <person name="Shakirov E.V."/>
            <person name="Haas B."/>
            <person name="Thimmapuram J."/>
            <person name="Nelson D."/>
            <person name="Wang X."/>
            <person name="Bowers J.E."/>
            <person name="Gschwend A.R."/>
            <person name="Delcher A.L."/>
            <person name="Singh R."/>
            <person name="Suzuki J.Y."/>
            <person name="Tripathi S."/>
            <person name="Neupane K."/>
            <person name="Wei H."/>
            <person name="Irikura B."/>
            <person name="Paidi M."/>
            <person name="Jiang N."/>
            <person name="Zhang W."/>
            <person name="Presting G."/>
            <person name="Windsor A."/>
            <person name="Navajas-Perez R."/>
            <person name="Torres M.J."/>
            <person name="Feltus F.A."/>
            <person name="Porter B."/>
            <person name="Li Y."/>
            <person name="Burroughs A.M."/>
            <person name="Luo M.C."/>
            <person name="Liu L."/>
            <person name="Christopher D.A."/>
            <person name="Mount S.M."/>
            <person name="Moore P.H."/>
            <person name="Sugimura T."/>
            <person name="Jiang J."/>
            <person name="Schuler M.A."/>
            <person name="Friedman V."/>
            <person name="Mitchell-Olds T."/>
            <person name="Shippen D.E."/>
            <person name="dePamphilis C.W."/>
            <person name="Palmer J.D."/>
            <person name="Freeling M."/>
            <person name="Paterson A.H."/>
            <person name="Gonsalves D."/>
            <person name="Wang L."/>
            <person name="Alam M."/>
        </authorList>
    </citation>
    <scope>NUCLEOTIDE SEQUENCE [LARGE SCALE GENOMIC DNA]</scope>
    <source>
        <strain>cv. SunUp</strain>
    </source>
</reference>
<comment type="function">
    <text evidence="1">NDH shuttles electrons from NAD(P)H:plastoquinone, via FMN and iron-sulfur (Fe-S) centers, to quinones in the photosynthetic chain and possibly in a chloroplast respiratory chain. The immediate electron acceptor for the enzyme in this species is believed to be plastoquinone. Couples the redox reaction to proton translocation, and thus conserves the redox energy in a proton gradient.</text>
</comment>
<comment type="catalytic activity">
    <reaction evidence="1">
        <text>a plastoquinone + NADH + (n+1) H(+)(in) = a plastoquinol + NAD(+) + n H(+)(out)</text>
        <dbReference type="Rhea" id="RHEA:42608"/>
        <dbReference type="Rhea" id="RHEA-COMP:9561"/>
        <dbReference type="Rhea" id="RHEA-COMP:9562"/>
        <dbReference type="ChEBI" id="CHEBI:15378"/>
        <dbReference type="ChEBI" id="CHEBI:17757"/>
        <dbReference type="ChEBI" id="CHEBI:57540"/>
        <dbReference type="ChEBI" id="CHEBI:57945"/>
        <dbReference type="ChEBI" id="CHEBI:62192"/>
    </reaction>
</comment>
<comment type="catalytic activity">
    <reaction evidence="1">
        <text>a plastoquinone + NADPH + (n+1) H(+)(in) = a plastoquinol + NADP(+) + n H(+)(out)</text>
        <dbReference type="Rhea" id="RHEA:42612"/>
        <dbReference type="Rhea" id="RHEA-COMP:9561"/>
        <dbReference type="Rhea" id="RHEA-COMP:9562"/>
        <dbReference type="ChEBI" id="CHEBI:15378"/>
        <dbReference type="ChEBI" id="CHEBI:17757"/>
        <dbReference type="ChEBI" id="CHEBI:57783"/>
        <dbReference type="ChEBI" id="CHEBI:58349"/>
        <dbReference type="ChEBI" id="CHEBI:62192"/>
    </reaction>
</comment>
<comment type="subunit">
    <text evidence="1">NDH is composed of at least 16 different subunits, 5 of which are encoded in the nucleus.</text>
</comment>
<comment type="subcellular location">
    <subcellularLocation>
        <location evidence="1">Plastid</location>
        <location evidence="1">Chloroplast thylakoid membrane</location>
        <topology evidence="1">Multi-pass membrane protein</topology>
    </subcellularLocation>
</comment>
<comment type="similarity">
    <text evidence="1">Belongs to the complex I subunit 3 family.</text>
</comment>
<proteinExistence type="inferred from homology"/>
<dbReference type="EC" id="7.1.1.-" evidence="1"/>
<dbReference type="EMBL" id="EU431223">
    <property type="protein sequence ID" value="ABY86787.1"/>
    <property type="molecule type" value="Genomic_DNA"/>
</dbReference>
<dbReference type="RefSeq" id="YP_001671688.1">
    <property type="nucleotide sequence ID" value="NC_010323.1"/>
</dbReference>
<dbReference type="SMR" id="B1A940"/>
<dbReference type="GeneID" id="5878369"/>
<dbReference type="KEGG" id="cpap:5878369"/>
<dbReference type="OrthoDB" id="154075at2759"/>
<dbReference type="GO" id="GO:0009535">
    <property type="term" value="C:chloroplast thylakoid membrane"/>
    <property type="evidence" value="ECO:0007669"/>
    <property type="project" value="UniProtKB-SubCell"/>
</dbReference>
<dbReference type="GO" id="GO:0030964">
    <property type="term" value="C:NADH dehydrogenase complex"/>
    <property type="evidence" value="ECO:0007669"/>
    <property type="project" value="TreeGrafter"/>
</dbReference>
<dbReference type="GO" id="GO:0008137">
    <property type="term" value="F:NADH dehydrogenase (ubiquinone) activity"/>
    <property type="evidence" value="ECO:0007669"/>
    <property type="project" value="InterPro"/>
</dbReference>
<dbReference type="GO" id="GO:0048038">
    <property type="term" value="F:quinone binding"/>
    <property type="evidence" value="ECO:0007669"/>
    <property type="project" value="UniProtKB-KW"/>
</dbReference>
<dbReference type="GO" id="GO:0019684">
    <property type="term" value="P:photosynthesis, light reaction"/>
    <property type="evidence" value="ECO:0007669"/>
    <property type="project" value="UniProtKB-UniRule"/>
</dbReference>
<dbReference type="FunFam" id="1.20.58.1610:FF:000001">
    <property type="entry name" value="NAD(P)H-quinone oxidoreductase subunit 3, chloroplastic"/>
    <property type="match status" value="1"/>
</dbReference>
<dbReference type="Gene3D" id="1.20.58.1610">
    <property type="entry name" value="NADH:ubiquinone/plastoquinone oxidoreductase, chain 3"/>
    <property type="match status" value="1"/>
</dbReference>
<dbReference type="HAMAP" id="MF_01394">
    <property type="entry name" value="NDH1_NuoA"/>
    <property type="match status" value="1"/>
</dbReference>
<dbReference type="InterPro" id="IPR023043">
    <property type="entry name" value="NAD(P)H_OxRDtase_bac/plastid"/>
</dbReference>
<dbReference type="InterPro" id="IPR000440">
    <property type="entry name" value="NADH_UbQ/plastoQ_OxRdtase_su3"/>
</dbReference>
<dbReference type="InterPro" id="IPR038430">
    <property type="entry name" value="NDAH_ubi_oxred_su3_sf"/>
</dbReference>
<dbReference type="PANTHER" id="PTHR11058">
    <property type="entry name" value="NADH-UBIQUINONE OXIDOREDUCTASE CHAIN 3"/>
    <property type="match status" value="1"/>
</dbReference>
<dbReference type="PANTHER" id="PTHR11058:SF9">
    <property type="entry name" value="NADH-UBIQUINONE OXIDOREDUCTASE CHAIN 3"/>
    <property type="match status" value="1"/>
</dbReference>
<dbReference type="Pfam" id="PF00507">
    <property type="entry name" value="Oxidored_q4"/>
    <property type="match status" value="1"/>
</dbReference>
<gene>
    <name evidence="1" type="primary">ndhC</name>
</gene>
<protein>
    <recommendedName>
        <fullName evidence="1">NAD(P)H-quinone oxidoreductase subunit 3, chloroplastic</fullName>
        <ecNumber evidence="1">7.1.1.-</ecNumber>
    </recommendedName>
    <alternativeName>
        <fullName evidence="1">NAD(P)H dehydrogenase subunit 3</fullName>
    </alternativeName>
    <alternativeName>
        <fullName evidence="1">NADH-plastoquinone oxidoreductase subunit 3</fullName>
    </alternativeName>
</protein>
<feature type="chain" id="PRO_0000362815" description="NAD(P)H-quinone oxidoreductase subunit 3, chloroplastic">
    <location>
        <begin position="1"/>
        <end position="120"/>
    </location>
</feature>
<feature type="transmembrane region" description="Helical" evidence="1">
    <location>
        <begin position="9"/>
        <end position="29"/>
    </location>
</feature>
<feature type="transmembrane region" description="Helical" evidence="1">
    <location>
        <begin position="64"/>
        <end position="84"/>
    </location>
</feature>
<feature type="transmembrane region" description="Helical" evidence="1">
    <location>
        <begin position="88"/>
        <end position="108"/>
    </location>
</feature>
<accession>B1A940</accession>
<geneLocation type="chloroplast"/>
<evidence type="ECO:0000255" key="1">
    <source>
        <dbReference type="HAMAP-Rule" id="MF_01394"/>
    </source>
</evidence>
<organism>
    <name type="scientific">Carica papaya</name>
    <name type="common">Papaya</name>
    <dbReference type="NCBI Taxonomy" id="3649"/>
    <lineage>
        <taxon>Eukaryota</taxon>
        <taxon>Viridiplantae</taxon>
        <taxon>Streptophyta</taxon>
        <taxon>Embryophyta</taxon>
        <taxon>Tracheophyta</taxon>
        <taxon>Spermatophyta</taxon>
        <taxon>Magnoliopsida</taxon>
        <taxon>eudicotyledons</taxon>
        <taxon>Gunneridae</taxon>
        <taxon>Pentapetalae</taxon>
        <taxon>rosids</taxon>
        <taxon>malvids</taxon>
        <taxon>Brassicales</taxon>
        <taxon>Caricaceae</taxon>
        <taxon>Carica</taxon>
    </lineage>
</organism>
<name>NU3C_CARPA</name>
<keyword id="KW-0150">Chloroplast</keyword>
<keyword id="KW-0472">Membrane</keyword>
<keyword id="KW-0520">NAD</keyword>
<keyword id="KW-0521">NADP</keyword>
<keyword id="KW-0934">Plastid</keyword>
<keyword id="KW-0618">Plastoquinone</keyword>
<keyword id="KW-0874">Quinone</keyword>
<keyword id="KW-0793">Thylakoid</keyword>
<keyword id="KW-1278">Translocase</keyword>
<keyword id="KW-0812">Transmembrane</keyword>
<keyword id="KW-1133">Transmembrane helix</keyword>
<keyword id="KW-0813">Transport</keyword>